<feature type="chain" id="PRO_0000207362" description="Urocanate hydratase">
    <location>
        <begin position="1"/>
        <end position="549"/>
    </location>
</feature>
<feature type="active site" evidence="1">
    <location>
        <position position="404"/>
    </location>
</feature>
<feature type="binding site" evidence="1">
    <location>
        <begin position="46"/>
        <end position="47"/>
    </location>
    <ligand>
        <name>NAD(+)</name>
        <dbReference type="ChEBI" id="CHEBI:57540"/>
    </ligand>
</feature>
<feature type="binding site" evidence="1">
    <location>
        <position position="124"/>
    </location>
    <ligand>
        <name>NAD(+)</name>
        <dbReference type="ChEBI" id="CHEBI:57540"/>
    </ligand>
</feature>
<feature type="binding site" evidence="1">
    <location>
        <begin position="170"/>
        <end position="172"/>
    </location>
    <ligand>
        <name>NAD(+)</name>
        <dbReference type="ChEBI" id="CHEBI:57540"/>
    </ligand>
</feature>
<feature type="binding site" evidence="1">
    <location>
        <position position="190"/>
    </location>
    <ligand>
        <name>NAD(+)</name>
        <dbReference type="ChEBI" id="CHEBI:57540"/>
    </ligand>
</feature>
<feature type="binding site" evidence="1">
    <location>
        <position position="195"/>
    </location>
    <ligand>
        <name>NAD(+)</name>
        <dbReference type="ChEBI" id="CHEBI:57540"/>
    </ligand>
</feature>
<feature type="binding site" evidence="1">
    <location>
        <begin position="236"/>
        <end position="237"/>
    </location>
    <ligand>
        <name>NAD(+)</name>
        <dbReference type="ChEBI" id="CHEBI:57540"/>
    </ligand>
</feature>
<feature type="binding site" evidence="1">
    <location>
        <begin position="257"/>
        <end position="261"/>
    </location>
    <ligand>
        <name>NAD(+)</name>
        <dbReference type="ChEBI" id="CHEBI:57540"/>
    </ligand>
</feature>
<feature type="binding site" evidence="1">
    <location>
        <begin position="267"/>
        <end position="268"/>
    </location>
    <ligand>
        <name>NAD(+)</name>
        <dbReference type="ChEBI" id="CHEBI:57540"/>
    </ligand>
</feature>
<feature type="binding site" evidence="1">
    <location>
        <position position="316"/>
    </location>
    <ligand>
        <name>NAD(+)</name>
        <dbReference type="ChEBI" id="CHEBI:57540"/>
    </ligand>
</feature>
<feature type="binding site" evidence="1">
    <location>
        <position position="486"/>
    </location>
    <ligand>
        <name>NAD(+)</name>
        <dbReference type="ChEBI" id="CHEBI:57540"/>
    </ligand>
</feature>
<protein>
    <recommendedName>
        <fullName evidence="1">Urocanate hydratase</fullName>
        <shortName evidence="1">Urocanase</shortName>
        <ecNumber evidence="1">4.2.1.49</ecNumber>
    </recommendedName>
    <alternativeName>
        <fullName evidence="1">Imidazolonepropionate hydrolase</fullName>
    </alternativeName>
</protein>
<name>HUTU_CALS4</name>
<evidence type="ECO:0000255" key="1">
    <source>
        <dbReference type="HAMAP-Rule" id="MF_00577"/>
    </source>
</evidence>
<accession>Q8RCH9</accession>
<keyword id="KW-0963">Cytoplasm</keyword>
<keyword id="KW-0369">Histidine metabolism</keyword>
<keyword id="KW-0456">Lyase</keyword>
<keyword id="KW-0520">NAD</keyword>
<keyword id="KW-1185">Reference proteome</keyword>
<proteinExistence type="inferred from homology"/>
<organism>
    <name type="scientific">Caldanaerobacter subterraneus subsp. tengcongensis (strain DSM 15242 / JCM 11007 / NBRC 100824 / MB4)</name>
    <name type="common">Thermoanaerobacter tengcongensis</name>
    <dbReference type="NCBI Taxonomy" id="273068"/>
    <lineage>
        <taxon>Bacteria</taxon>
        <taxon>Bacillati</taxon>
        <taxon>Bacillota</taxon>
        <taxon>Clostridia</taxon>
        <taxon>Thermoanaerobacterales</taxon>
        <taxon>Thermoanaerobacteraceae</taxon>
        <taxon>Caldanaerobacter</taxon>
    </lineage>
</organism>
<dbReference type="EC" id="4.2.1.49" evidence="1"/>
<dbReference type="EMBL" id="AE008691">
    <property type="protein sequence ID" value="AAM23733.1"/>
    <property type="molecule type" value="Genomic_DNA"/>
</dbReference>
<dbReference type="RefSeq" id="WP_011024887.1">
    <property type="nucleotide sequence ID" value="NC_003869.1"/>
</dbReference>
<dbReference type="SMR" id="Q8RCH9"/>
<dbReference type="STRING" id="273068.TTE0449"/>
<dbReference type="KEGG" id="tte:TTE0449"/>
<dbReference type="eggNOG" id="COG2987">
    <property type="taxonomic scope" value="Bacteria"/>
</dbReference>
<dbReference type="HOGENOM" id="CLU_018868_0_1_9"/>
<dbReference type="OrthoDB" id="9764874at2"/>
<dbReference type="UniPathway" id="UPA00379">
    <property type="reaction ID" value="UER00550"/>
</dbReference>
<dbReference type="Proteomes" id="UP000000555">
    <property type="component" value="Chromosome"/>
</dbReference>
<dbReference type="GO" id="GO:0005737">
    <property type="term" value="C:cytoplasm"/>
    <property type="evidence" value="ECO:0007669"/>
    <property type="project" value="UniProtKB-SubCell"/>
</dbReference>
<dbReference type="GO" id="GO:0016153">
    <property type="term" value="F:urocanate hydratase activity"/>
    <property type="evidence" value="ECO:0007669"/>
    <property type="project" value="UniProtKB-UniRule"/>
</dbReference>
<dbReference type="GO" id="GO:0019556">
    <property type="term" value="P:L-histidine catabolic process to glutamate and formamide"/>
    <property type="evidence" value="ECO:0007669"/>
    <property type="project" value="UniProtKB-UniPathway"/>
</dbReference>
<dbReference type="GO" id="GO:0019557">
    <property type="term" value="P:L-histidine catabolic process to glutamate and formate"/>
    <property type="evidence" value="ECO:0007669"/>
    <property type="project" value="UniProtKB-UniPathway"/>
</dbReference>
<dbReference type="FunFam" id="3.40.50.10730:FF:000001">
    <property type="entry name" value="Urocanate hydratase"/>
    <property type="match status" value="1"/>
</dbReference>
<dbReference type="Gene3D" id="3.40.50.10730">
    <property type="entry name" value="Urocanase like domains"/>
    <property type="match status" value="1"/>
</dbReference>
<dbReference type="Gene3D" id="3.40.1770.10">
    <property type="entry name" value="Urocanase superfamily"/>
    <property type="match status" value="1"/>
</dbReference>
<dbReference type="HAMAP" id="MF_00577">
    <property type="entry name" value="HutU"/>
    <property type="match status" value="1"/>
</dbReference>
<dbReference type="InterPro" id="IPR055351">
    <property type="entry name" value="Urocanase"/>
</dbReference>
<dbReference type="InterPro" id="IPR023637">
    <property type="entry name" value="Urocanase-like"/>
</dbReference>
<dbReference type="InterPro" id="IPR035401">
    <property type="entry name" value="Urocanase_C"/>
</dbReference>
<dbReference type="InterPro" id="IPR038364">
    <property type="entry name" value="Urocanase_central_sf"/>
</dbReference>
<dbReference type="InterPro" id="IPR023636">
    <property type="entry name" value="Urocanase_CS"/>
</dbReference>
<dbReference type="InterPro" id="IPR035400">
    <property type="entry name" value="Urocanase_N"/>
</dbReference>
<dbReference type="InterPro" id="IPR035085">
    <property type="entry name" value="Urocanase_Rossmann-like"/>
</dbReference>
<dbReference type="InterPro" id="IPR036190">
    <property type="entry name" value="Urocanase_sf"/>
</dbReference>
<dbReference type="NCBIfam" id="TIGR01228">
    <property type="entry name" value="hutU"/>
    <property type="match status" value="1"/>
</dbReference>
<dbReference type="NCBIfam" id="NF003820">
    <property type="entry name" value="PRK05414.1"/>
    <property type="match status" value="1"/>
</dbReference>
<dbReference type="PANTHER" id="PTHR12216">
    <property type="entry name" value="UROCANATE HYDRATASE"/>
    <property type="match status" value="1"/>
</dbReference>
<dbReference type="PANTHER" id="PTHR12216:SF4">
    <property type="entry name" value="UROCANATE HYDRATASE"/>
    <property type="match status" value="1"/>
</dbReference>
<dbReference type="Pfam" id="PF01175">
    <property type="entry name" value="Urocanase"/>
    <property type="match status" value="1"/>
</dbReference>
<dbReference type="Pfam" id="PF17392">
    <property type="entry name" value="Urocanase_C"/>
    <property type="match status" value="1"/>
</dbReference>
<dbReference type="Pfam" id="PF17391">
    <property type="entry name" value="Urocanase_N"/>
    <property type="match status" value="1"/>
</dbReference>
<dbReference type="PIRSF" id="PIRSF001423">
    <property type="entry name" value="Urocanate_hydrat"/>
    <property type="match status" value="1"/>
</dbReference>
<dbReference type="SUPFAM" id="SSF111326">
    <property type="entry name" value="Urocanase"/>
    <property type="match status" value="1"/>
</dbReference>
<dbReference type="PROSITE" id="PS01233">
    <property type="entry name" value="UROCANASE"/>
    <property type="match status" value="1"/>
</dbReference>
<reference key="1">
    <citation type="journal article" date="2002" name="Genome Res.">
        <title>A complete sequence of the T. tengcongensis genome.</title>
        <authorList>
            <person name="Bao Q."/>
            <person name="Tian Y."/>
            <person name="Li W."/>
            <person name="Xu Z."/>
            <person name="Xuan Z."/>
            <person name="Hu S."/>
            <person name="Dong W."/>
            <person name="Yang J."/>
            <person name="Chen Y."/>
            <person name="Xue Y."/>
            <person name="Xu Y."/>
            <person name="Lai X."/>
            <person name="Huang L."/>
            <person name="Dong X."/>
            <person name="Ma Y."/>
            <person name="Ling L."/>
            <person name="Tan H."/>
            <person name="Chen R."/>
            <person name="Wang J."/>
            <person name="Yu J."/>
            <person name="Yang H."/>
        </authorList>
    </citation>
    <scope>NUCLEOTIDE SEQUENCE [LARGE SCALE GENOMIC DNA]</scope>
    <source>
        <strain>DSM 15242 / JCM 11007 / NBRC 100824 / MB4</strain>
    </source>
</reference>
<sequence>MSRVVRAPRGTELHCKNWQIEAPYRMIMNNLDPEVAEDPANLIVYGGAGKAARNWEAFDKILESLENLEEDETLLVQSGKPVGIFKTHEMAPRVLISNAMLVPKWANWETFWDLEAKGLTMYGQMTAGSWIYIGSQGIVEGTFETFAALAKKHFDGSLKGKFVLSAGLGGMGGAQPLAITMLDGACLIVEVDRNRIKRRLETKYLDVMAEDLDEALGMVMKAKEEGRALSVGLVGNAADVHPELVRRGIIPDVVTDQTSAHDPLNGYVPNGMTLDEAIALRKSNPEEYIKRAKKAMAEHVLAMLEMQKRGAIVFDYGNNIRRMAYDEGVKDAFNIPSYVPEYIRDLFCEGKGPFRWVALSGDPEDIYKTDQKVLELFPDDPILNRWIRLARERVKFQGLPARICWLGYGQRAEFGLAINEMVRKGELKAPIVIGRDHHDTGSVASPYRETEAMKDGSDAIADWPILNALLNTASGATWVSVHHGGGVGIGYSIHAGVVVCADGTKETDLRIERVLTGDPGLGIVRHADAGYEIAIKTAKEKGIKMPMLK</sequence>
<comment type="function">
    <text evidence="1">Catalyzes the conversion of urocanate to 4-imidazolone-5-propionate.</text>
</comment>
<comment type="catalytic activity">
    <reaction evidence="1">
        <text>4-imidazolone-5-propanoate = trans-urocanate + H2O</text>
        <dbReference type="Rhea" id="RHEA:13101"/>
        <dbReference type="ChEBI" id="CHEBI:15377"/>
        <dbReference type="ChEBI" id="CHEBI:17771"/>
        <dbReference type="ChEBI" id="CHEBI:77893"/>
        <dbReference type="EC" id="4.2.1.49"/>
    </reaction>
</comment>
<comment type="cofactor">
    <cofactor evidence="1">
        <name>NAD(+)</name>
        <dbReference type="ChEBI" id="CHEBI:57540"/>
    </cofactor>
    <text evidence="1">Binds 1 NAD(+) per subunit.</text>
</comment>
<comment type="pathway">
    <text evidence="1">Amino-acid degradation; L-histidine degradation into L-glutamate; N-formimidoyl-L-glutamate from L-histidine: step 2/3.</text>
</comment>
<comment type="subcellular location">
    <subcellularLocation>
        <location evidence="1">Cytoplasm</location>
    </subcellularLocation>
</comment>
<comment type="similarity">
    <text evidence="1">Belongs to the urocanase family.</text>
</comment>
<gene>
    <name evidence="1" type="primary">hutU</name>
    <name type="ordered locus">TTE0449</name>
</gene>